<name>RS17_STRP6</name>
<reference key="1">
    <citation type="journal article" date="2004" name="J. Infect. Dis.">
        <title>Progress toward characterization of the group A Streptococcus metagenome: complete genome sequence of a macrolide-resistant serotype M6 strain.</title>
        <authorList>
            <person name="Banks D.J."/>
            <person name="Porcella S.F."/>
            <person name="Barbian K.D."/>
            <person name="Beres S.B."/>
            <person name="Philips L.E."/>
            <person name="Voyich J.M."/>
            <person name="DeLeo F.R."/>
            <person name="Martin J.M."/>
            <person name="Somerville G.A."/>
            <person name="Musser J.M."/>
        </authorList>
    </citation>
    <scope>NUCLEOTIDE SEQUENCE [LARGE SCALE GENOMIC DNA]</scope>
    <source>
        <strain>ATCC BAA-946 / MGAS10394</strain>
    </source>
</reference>
<evidence type="ECO:0000255" key="1">
    <source>
        <dbReference type="HAMAP-Rule" id="MF_01345"/>
    </source>
</evidence>
<evidence type="ECO:0000305" key="2"/>
<comment type="function">
    <text evidence="1">One of the primary rRNA binding proteins, it binds specifically to the 5'-end of 16S ribosomal RNA.</text>
</comment>
<comment type="subunit">
    <text evidence="1">Part of the 30S ribosomal subunit.</text>
</comment>
<comment type="similarity">
    <text evidence="1">Belongs to the universal ribosomal protein uS17 family.</text>
</comment>
<feature type="chain" id="PRO_0000233580" description="Small ribosomal subunit protein uS17">
    <location>
        <begin position="1"/>
        <end position="86"/>
    </location>
</feature>
<proteinExistence type="inferred from homology"/>
<organism>
    <name type="scientific">Streptococcus pyogenes serotype M6 (strain ATCC BAA-946 / MGAS10394)</name>
    <dbReference type="NCBI Taxonomy" id="286636"/>
    <lineage>
        <taxon>Bacteria</taxon>
        <taxon>Bacillati</taxon>
        <taxon>Bacillota</taxon>
        <taxon>Bacilli</taxon>
        <taxon>Lactobacillales</taxon>
        <taxon>Streptococcaceae</taxon>
        <taxon>Streptococcus</taxon>
    </lineage>
</organism>
<sequence length="86" mass="10091">MERNQRKTLYGRVVSDKMDKTITVVVETKRNHPVYGKRINYSKKYKAHDENNVAKEGDIVRIMETRPLSATKRFRLVEVVEEAVII</sequence>
<accession>Q5XEC6</accession>
<protein>
    <recommendedName>
        <fullName evidence="1">Small ribosomal subunit protein uS17</fullName>
    </recommendedName>
    <alternativeName>
        <fullName evidence="2">30S ribosomal protein S17</fullName>
    </alternativeName>
</protein>
<gene>
    <name evidence="1" type="primary">rpsQ</name>
    <name type="ordered locus">M6_Spy0102</name>
</gene>
<keyword id="KW-0687">Ribonucleoprotein</keyword>
<keyword id="KW-0689">Ribosomal protein</keyword>
<keyword id="KW-0694">RNA-binding</keyword>
<keyword id="KW-0699">rRNA-binding</keyword>
<dbReference type="EMBL" id="CP000003">
    <property type="protein sequence ID" value="AAT86237.1"/>
    <property type="molecule type" value="Genomic_DNA"/>
</dbReference>
<dbReference type="RefSeq" id="WP_011184078.1">
    <property type="nucleotide sequence ID" value="NC_006086.1"/>
</dbReference>
<dbReference type="SMR" id="Q5XEC6"/>
<dbReference type="KEGG" id="spa:M6_Spy0102"/>
<dbReference type="HOGENOM" id="CLU_073626_1_0_9"/>
<dbReference type="Proteomes" id="UP000001167">
    <property type="component" value="Chromosome"/>
</dbReference>
<dbReference type="GO" id="GO:0022627">
    <property type="term" value="C:cytosolic small ribosomal subunit"/>
    <property type="evidence" value="ECO:0007669"/>
    <property type="project" value="TreeGrafter"/>
</dbReference>
<dbReference type="GO" id="GO:0019843">
    <property type="term" value="F:rRNA binding"/>
    <property type="evidence" value="ECO:0007669"/>
    <property type="project" value="UniProtKB-UniRule"/>
</dbReference>
<dbReference type="GO" id="GO:0003735">
    <property type="term" value="F:structural constituent of ribosome"/>
    <property type="evidence" value="ECO:0007669"/>
    <property type="project" value="InterPro"/>
</dbReference>
<dbReference type="GO" id="GO:0006412">
    <property type="term" value="P:translation"/>
    <property type="evidence" value="ECO:0007669"/>
    <property type="project" value="UniProtKB-UniRule"/>
</dbReference>
<dbReference type="CDD" id="cd00364">
    <property type="entry name" value="Ribosomal_uS17"/>
    <property type="match status" value="1"/>
</dbReference>
<dbReference type="FunFam" id="2.40.50.140:FF:000026">
    <property type="entry name" value="30S ribosomal protein S17"/>
    <property type="match status" value="1"/>
</dbReference>
<dbReference type="Gene3D" id="2.40.50.140">
    <property type="entry name" value="Nucleic acid-binding proteins"/>
    <property type="match status" value="1"/>
</dbReference>
<dbReference type="HAMAP" id="MF_01345_B">
    <property type="entry name" value="Ribosomal_uS17_B"/>
    <property type="match status" value="1"/>
</dbReference>
<dbReference type="InterPro" id="IPR012340">
    <property type="entry name" value="NA-bd_OB-fold"/>
</dbReference>
<dbReference type="InterPro" id="IPR000266">
    <property type="entry name" value="Ribosomal_uS17"/>
</dbReference>
<dbReference type="InterPro" id="IPR019984">
    <property type="entry name" value="Ribosomal_uS17_bact/chlr"/>
</dbReference>
<dbReference type="InterPro" id="IPR019979">
    <property type="entry name" value="Ribosomal_uS17_CS"/>
</dbReference>
<dbReference type="NCBIfam" id="NF004123">
    <property type="entry name" value="PRK05610.1"/>
    <property type="match status" value="1"/>
</dbReference>
<dbReference type="NCBIfam" id="TIGR03635">
    <property type="entry name" value="uS17_bact"/>
    <property type="match status" value="1"/>
</dbReference>
<dbReference type="PANTHER" id="PTHR10744">
    <property type="entry name" value="40S RIBOSOMAL PROTEIN S11 FAMILY MEMBER"/>
    <property type="match status" value="1"/>
</dbReference>
<dbReference type="PANTHER" id="PTHR10744:SF1">
    <property type="entry name" value="SMALL RIBOSOMAL SUBUNIT PROTEIN US17M"/>
    <property type="match status" value="1"/>
</dbReference>
<dbReference type="Pfam" id="PF00366">
    <property type="entry name" value="Ribosomal_S17"/>
    <property type="match status" value="1"/>
</dbReference>
<dbReference type="PRINTS" id="PR00973">
    <property type="entry name" value="RIBOSOMALS17"/>
</dbReference>
<dbReference type="SUPFAM" id="SSF50249">
    <property type="entry name" value="Nucleic acid-binding proteins"/>
    <property type="match status" value="1"/>
</dbReference>
<dbReference type="PROSITE" id="PS00056">
    <property type="entry name" value="RIBOSOMAL_S17"/>
    <property type="match status" value="1"/>
</dbReference>